<name>YK13_CAEEL</name>
<keyword id="KW-0378">Hydrolase</keyword>
<keyword id="KW-0904">Protein phosphatase</keyword>
<keyword id="KW-1185">Reference proteome</keyword>
<evidence type="ECO:0000255" key="1">
    <source>
        <dbReference type="PROSITE-ProRule" id="PRU00160"/>
    </source>
</evidence>
<evidence type="ECO:0000256" key="2">
    <source>
        <dbReference type="SAM" id="MobiDB-lite"/>
    </source>
</evidence>
<evidence type="ECO:0000305" key="3"/>
<comment type="catalytic activity">
    <reaction>
        <text>O-phospho-L-tyrosyl-[protein] + H2O = L-tyrosyl-[protein] + phosphate</text>
        <dbReference type="Rhea" id="RHEA:10684"/>
        <dbReference type="Rhea" id="RHEA-COMP:10136"/>
        <dbReference type="Rhea" id="RHEA-COMP:20101"/>
        <dbReference type="ChEBI" id="CHEBI:15377"/>
        <dbReference type="ChEBI" id="CHEBI:43474"/>
        <dbReference type="ChEBI" id="CHEBI:46858"/>
        <dbReference type="ChEBI" id="CHEBI:61978"/>
        <dbReference type="EC" id="3.1.3.48"/>
    </reaction>
</comment>
<comment type="similarity">
    <text evidence="3">Belongs to the protein-tyrosine phosphatase family. Non-receptor class subfamily.</text>
</comment>
<proteinExistence type="inferred from homology"/>
<sequence length="398" mass="44926">MERSQKSARKKKKTSKSGNDRSIRSERKSKQKKPAGEKSQKSRRTRKSRGPKGNGFTSRETIQPSSSGQSEGTTRMDDQKDEKKDDKKEEKKEERKEEKKEEVKEPWSEEEPAKRMVANGFFTTTNVGGTFKQTDNFKTPMDSCPSFKNNMHKIRAPDCPIPEEKLVKLTNGPESFICAAKITVPDFNRTMILTQVPDLSSAPDIADFWRMIHQESIASVVIAVMPLEVTLQQILPLLSGTYSTYGKMFVNNKKVESAVGMTEYCLEIFPDGCSNSLLTTVYHLHNWRQKRGLEVVTDLVATMEKVMKVNDNTVLMSMNGTGRAGTMLTLFTAMLQVQKGKEVNAKETLASLRAERCGIVDNIDQFGTVHRSMACWFKNNSTNEEVQRKVVEFAPSIQ</sequence>
<dbReference type="EC" id="3.1.3.48"/>
<dbReference type="EMBL" id="Z22173">
    <property type="protein sequence ID" value="CAA80125.1"/>
    <property type="molecule type" value="Genomic_DNA"/>
</dbReference>
<dbReference type="PIR" id="S40752">
    <property type="entry name" value="S40752"/>
</dbReference>
<dbReference type="RefSeq" id="NP_499135.1">
    <property type="nucleotide sequence ID" value="NM_066734.6"/>
</dbReference>
<dbReference type="SMR" id="P34337"/>
<dbReference type="FunCoup" id="P34337">
    <property type="interactions" value="80"/>
</dbReference>
<dbReference type="STRING" id="6239.C15H7.3.1"/>
<dbReference type="PaxDb" id="6239-C15H7.3"/>
<dbReference type="EnsemblMetazoa" id="C15H7.3.1">
    <property type="protein sequence ID" value="C15H7.3.1"/>
    <property type="gene ID" value="WBGene00007610"/>
</dbReference>
<dbReference type="EnsemblMetazoa" id="C15H7.3.2">
    <property type="protein sequence ID" value="C15H7.3.2"/>
    <property type="gene ID" value="WBGene00007610"/>
</dbReference>
<dbReference type="GeneID" id="182639"/>
<dbReference type="KEGG" id="cel:CELE_C15H7.3"/>
<dbReference type="UCSC" id="C15H7.3">
    <property type="organism name" value="c. elegans"/>
</dbReference>
<dbReference type="AGR" id="WB:WBGene00007610"/>
<dbReference type="CTD" id="182639"/>
<dbReference type="WormBase" id="C15H7.3">
    <property type="protein sequence ID" value="CE00081"/>
    <property type="gene ID" value="WBGene00007610"/>
</dbReference>
<dbReference type="eggNOG" id="KOG0789">
    <property type="taxonomic scope" value="Eukaryota"/>
</dbReference>
<dbReference type="GeneTree" id="ENSGT00970000195861"/>
<dbReference type="HOGENOM" id="CLU_058106_0_0_1"/>
<dbReference type="InParanoid" id="P34337"/>
<dbReference type="OMA" id="LHNWRQK"/>
<dbReference type="OrthoDB" id="5870053at2759"/>
<dbReference type="PhylomeDB" id="P34337"/>
<dbReference type="PRO" id="PR:P34337"/>
<dbReference type="Proteomes" id="UP000001940">
    <property type="component" value="Chromosome III"/>
</dbReference>
<dbReference type="Bgee" id="WBGene00007610">
    <property type="expression patterns" value="Expressed in material anatomical entity and 2 other cell types or tissues"/>
</dbReference>
<dbReference type="GO" id="GO:0004725">
    <property type="term" value="F:protein tyrosine phosphatase activity"/>
    <property type="evidence" value="ECO:0007669"/>
    <property type="project" value="UniProtKB-EC"/>
</dbReference>
<dbReference type="CDD" id="cd00047">
    <property type="entry name" value="PTPc"/>
    <property type="match status" value="1"/>
</dbReference>
<dbReference type="Gene3D" id="3.90.190.10">
    <property type="entry name" value="Protein tyrosine phosphatase superfamily"/>
    <property type="match status" value="1"/>
</dbReference>
<dbReference type="InterPro" id="IPR029021">
    <property type="entry name" value="Prot-tyrosine_phosphatase-like"/>
</dbReference>
<dbReference type="InterPro" id="IPR000242">
    <property type="entry name" value="PTP_cat"/>
</dbReference>
<dbReference type="InterPro" id="IPR003595">
    <property type="entry name" value="Tyr_Pase_cat"/>
</dbReference>
<dbReference type="InterPro" id="IPR000387">
    <property type="entry name" value="Tyr_Pase_dom"/>
</dbReference>
<dbReference type="PANTHER" id="PTHR23219">
    <property type="entry name" value="TYROSINE-PROTEIN PHOSPHATASE C15H7.3-RELATED"/>
    <property type="match status" value="1"/>
</dbReference>
<dbReference type="PANTHER" id="PTHR23219:SF18">
    <property type="entry name" value="TYROSINE-PROTEIN PHOSPHATASE DOMAIN-CONTAINING PROTEIN-RELATED"/>
    <property type="match status" value="1"/>
</dbReference>
<dbReference type="Pfam" id="PF00102">
    <property type="entry name" value="Y_phosphatase"/>
    <property type="match status" value="1"/>
</dbReference>
<dbReference type="SMART" id="SM00194">
    <property type="entry name" value="PTPc"/>
    <property type="match status" value="1"/>
</dbReference>
<dbReference type="SMART" id="SM00404">
    <property type="entry name" value="PTPc_motif"/>
    <property type="match status" value="1"/>
</dbReference>
<dbReference type="SUPFAM" id="SSF52799">
    <property type="entry name" value="(Phosphotyrosine protein) phosphatases II"/>
    <property type="match status" value="1"/>
</dbReference>
<dbReference type="PROSITE" id="PS50056">
    <property type="entry name" value="TYR_PHOSPHATASE_2"/>
    <property type="match status" value="1"/>
</dbReference>
<dbReference type="PROSITE" id="PS50055">
    <property type="entry name" value="TYR_PHOSPHATASE_PTP"/>
    <property type="match status" value="1"/>
</dbReference>
<organism>
    <name type="scientific">Caenorhabditis elegans</name>
    <dbReference type="NCBI Taxonomy" id="6239"/>
    <lineage>
        <taxon>Eukaryota</taxon>
        <taxon>Metazoa</taxon>
        <taxon>Ecdysozoa</taxon>
        <taxon>Nematoda</taxon>
        <taxon>Chromadorea</taxon>
        <taxon>Rhabditida</taxon>
        <taxon>Rhabditina</taxon>
        <taxon>Rhabditomorpha</taxon>
        <taxon>Rhabditoidea</taxon>
        <taxon>Rhabditidae</taxon>
        <taxon>Peloderinae</taxon>
        <taxon>Caenorhabditis</taxon>
    </lineage>
</organism>
<protein>
    <recommendedName>
        <fullName>Putative tyrosine-protein phosphatase C15H7.3</fullName>
        <ecNumber>3.1.3.48</ecNumber>
    </recommendedName>
</protein>
<accession>P34337</accession>
<gene>
    <name type="ORF">C15H7.3</name>
</gene>
<feature type="chain" id="PRO_0000094927" description="Putative tyrosine-protein phosphatase C15H7.3">
    <location>
        <begin position="1"/>
        <end position="398"/>
    </location>
</feature>
<feature type="domain" description="Tyrosine-protein phosphatase" evidence="1">
    <location>
        <begin position="125"/>
        <end position="376"/>
    </location>
</feature>
<feature type="region of interest" description="Disordered" evidence="2">
    <location>
        <begin position="1"/>
        <end position="114"/>
    </location>
</feature>
<feature type="compositionally biased region" description="Basic residues" evidence="2">
    <location>
        <begin position="1"/>
        <end position="15"/>
    </location>
</feature>
<feature type="compositionally biased region" description="Basic and acidic residues" evidence="2">
    <location>
        <begin position="18"/>
        <end position="40"/>
    </location>
</feature>
<feature type="compositionally biased region" description="Basic residues" evidence="2">
    <location>
        <begin position="41"/>
        <end position="50"/>
    </location>
</feature>
<feature type="compositionally biased region" description="Polar residues" evidence="2">
    <location>
        <begin position="55"/>
        <end position="73"/>
    </location>
</feature>
<feature type="compositionally biased region" description="Basic and acidic residues" evidence="2">
    <location>
        <begin position="74"/>
        <end position="114"/>
    </location>
</feature>
<reference key="1">
    <citation type="journal article" date="1994" name="Nature">
        <title>2.2 Mb of contiguous nucleotide sequence from chromosome III of C. elegans.</title>
        <authorList>
            <person name="Wilson R."/>
            <person name="Ainscough R."/>
            <person name="Anderson K."/>
            <person name="Baynes C."/>
            <person name="Berks M."/>
            <person name="Bonfield J."/>
            <person name="Burton J."/>
            <person name="Connell M."/>
            <person name="Copsey T."/>
            <person name="Cooper J."/>
            <person name="Coulson A."/>
            <person name="Craxton M."/>
            <person name="Dear S."/>
            <person name="Du Z."/>
            <person name="Durbin R."/>
            <person name="Favello A."/>
            <person name="Fraser A."/>
            <person name="Fulton L."/>
            <person name="Gardner A."/>
            <person name="Green P."/>
            <person name="Hawkins T."/>
            <person name="Hillier L."/>
            <person name="Jier M."/>
            <person name="Johnston L."/>
            <person name="Jones M."/>
            <person name="Kershaw J."/>
            <person name="Kirsten J."/>
            <person name="Laisster N."/>
            <person name="Latreille P."/>
            <person name="Lightning J."/>
            <person name="Lloyd C."/>
            <person name="Mortimore B."/>
            <person name="O'Callaghan M."/>
            <person name="Parsons J."/>
            <person name="Percy C."/>
            <person name="Rifken L."/>
            <person name="Roopra A."/>
            <person name="Saunders D."/>
            <person name="Shownkeen R."/>
            <person name="Sims M."/>
            <person name="Smaldon N."/>
            <person name="Smith A."/>
            <person name="Smith M."/>
            <person name="Sonnhammer E."/>
            <person name="Staden R."/>
            <person name="Sulston J."/>
            <person name="Thierry-Mieg J."/>
            <person name="Thomas K."/>
            <person name="Vaudin M."/>
            <person name="Vaughan K."/>
            <person name="Waterston R."/>
            <person name="Watson A."/>
            <person name="Weinstock L."/>
            <person name="Wilkinson-Sproat J."/>
            <person name="Wohldman P."/>
        </authorList>
    </citation>
    <scope>NUCLEOTIDE SEQUENCE [LARGE SCALE GENOMIC DNA]</scope>
    <source>
        <strain>Bristol N2</strain>
    </source>
</reference>
<reference key="2">
    <citation type="journal article" date="1998" name="Science">
        <title>Genome sequence of the nematode C. elegans: a platform for investigating biology.</title>
        <authorList>
            <consortium name="The C. elegans sequencing consortium"/>
        </authorList>
    </citation>
    <scope>NUCLEOTIDE SEQUENCE [LARGE SCALE GENOMIC DNA]</scope>
    <source>
        <strain>Bristol N2</strain>
    </source>
</reference>